<keyword id="KW-0106">Calcium</keyword>
<keyword id="KW-1015">Disulfide bond</keyword>
<keyword id="KW-0325">Glycoprotein</keyword>
<keyword id="KW-0349">Heme</keyword>
<keyword id="KW-0376">Hydrogen peroxide</keyword>
<keyword id="KW-0408">Iron</keyword>
<keyword id="KW-0479">Metal-binding</keyword>
<keyword id="KW-0560">Oxidoreductase</keyword>
<keyword id="KW-0575">Peroxidase</keyword>
<keyword id="KW-1185">Reference proteome</keyword>
<keyword id="KW-0964">Secreted</keyword>
<keyword id="KW-0732">Signal</keyword>
<comment type="function">
    <text>Removal of H(2)O(2), oxidation of toxic reductants, biosynthesis and degradation of lignin, suberization, auxin catabolism, response to environmental stresses such as wounding, pathogen attack and oxidative stress. These functions might be dependent on each isozyme/isoform in each plant tissue.</text>
</comment>
<comment type="catalytic activity">
    <reaction>
        <text>2 a phenolic donor + H2O2 = 2 a phenolic radical donor + 2 H2O</text>
        <dbReference type="Rhea" id="RHEA:56136"/>
        <dbReference type="ChEBI" id="CHEBI:15377"/>
        <dbReference type="ChEBI" id="CHEBI:16240"/>
        <dbReference type="ChEBI" id="CHEBI:139520"/>
        <dbReference type="ChEBI" id="CHEBI:139521"/>
        <dbReference type="EC" id="1.11.1.7"/>
    </reaction>
</comment>
<comment type="cofactor">
    <cofactor evidence="2">
        <name>heme b</name>
        <dbReference type="ChEBI" id="CHEBI:60344"/>
    </cofactor>
    <text evidence="2">Binds 1 heme b (iron(II)-protoporphyrin IX) group per subunit.</text>
</comment>
<comment type="cofactor">
    <cofactor evidence="2">
        <name>Ca(2+)</name>
        <dbReference type="ChEBI" id="CHEBI:29108"/>
    </cofactor>
    <text evidence="2">Binds 2 calcium ions per subunit.</text>
</comment>
<comment type="subcellular location">
    <subcellularLocation>
        <location evidence="2">Secreted</location>
    </subcellularLocation>
</comment>
<comment type="miscellaneous">
    <text>There are 73 peroxidase genes in A.thaliana.</text>
</comment>
<comment type="similarity">
    <text evidence="2">Belongs to the peroxidase family. Classical plant (class III) peroxidase subfamily.</text>
</comment>
<comment type="sequence caution" evidence="4">
    <conflict type="frameshift">
        <sequence resource="EMBL-CDS" id="CAA79097"/>
    </conflict>
</comment>
<evidence type="ECO:0000255" key="1"/>
<evidence type="ECO:0000255" key="2">
    <source>
        <dbReference type="PROSITE-ProRule" id="PRU00297"/>
    </source>
</evidence>
<evidence type="ECO:0000255" key="3">
    <source>
        <dbReference type="PROSITE-ProRule" id="PRU10012"/>
    </source>
</evidence>
<evidence type="ECO:0000305" key="4"/>
<feature type="signal peptide" evidence="1">
    <location>
        <begin position="1"/>
        <end position="31"/>
    </location>
</feature>
<feature type="chain" id="PRO_0000023721" description="Peroxidase 56">
    <location>
        <begin position="32"/>
        <end position="329"/>
    </location>
</feature>
<feature type="active site" description="Proton acceptor" evidence="2 3">
    <location>
        <position position="72"/>
    </location>
</feature>
<feature type="binding site" evidence="2">
    <location>
        <position position="73"/>
    </location>
    <ligand>
        <name>Ca(2+)</name>
        <dbReference type="ChEBI" id="CHEBI:29108"/>
        <label>1</label>
    </ligand>
</feature>
<feature type="binding site" evidence="2">
    <location>
        <position position="76"/>
    </location>
    <ligand>
        <name>Ca(2+)</name>
        <dbReference type="ChEBI" id="CHEBI:29108"/>
        <label>1</label>
    </ligand>
</feature>
<feature type="binding site" evidence="2">
    <location>
        <position position="78"/>
    </location>
    <ligand>
        <name>Ca(2+)</name>
        <dbReference type="ChEBI" id="CHEBI:29108"/>
        <label>1</label>
    </ligand>
</feature>
<feature type="binding site" evidence="2">
    <location>
        <position position="80"/>
    </location>
    <ligand>
        <name>Ca(2+)</name>
        <dbReference type="ChEBI" id="CHEBI:29108"/>
        <label>1</label>
    </ligand>
</feature>
<feature type="binding site" evidence="2">
    <location>
        <position position="82"/>
    </location>
    <ligand>
        <name>Ca(2+)</name>
        <dbReference type="ChEBI" id="CHEBI:29108"/>
        <label>1</label>
    </ligand>
</feature>
<feature type="binding site" evidence="2">
    <location>
        <position position="167"/>
    </location>
    <ligand>
        <name>substrate</name>
    </ligand>
</feature>
<feature type="binding site" description="axial binding residue" evidence="2">
    <location>
        <position position="197"/>
    </location>
    <ligand>
        <name>heme b</name>
        <dbReference type="ChEBI" id="CHEBI:60344"/>
    </ligand>
    <ligandPart>
        <name>Fe</name>
        <dbReference type="ChEBI" id="CHEBI:18248"/>
    </ligandPart>
</feature>
<feature type="binding site" evidence="2">
    <location>
        <position position="198"/>
    </location>
    <ligand>
        <name>Ca(2+)</name>
        <dbReference type="ChEBI" id="CHEBI:29108"/>
        <label>2</label>
    </ligand>
</feature>
<feature type="binding site" evidence="2">
    <location>
        <position position="248"/>
    </location>
    <ligand>
        <name>Ca(2+)</name>
        <dbReference type="ChEBI" id="CHEBI:29108"/>
        <label>2</label>
    </ligand>
</feature>
<feature type="binding site" evidence="2">
    <location>
        <position position="251"/>
    </location>
    <ligand>
        <name>Ca(2+)</name>
        <dbReference type="ChEBI" id="CHEBI:29108"/>
        <label>2</label>
    </ligand>
</feature>
<feature type="binding site" evidence="2">
    <location>
        <position position="256"/>
    </location>
    <ligand>
        <name>Ca(2+)</name>
        <dbReference type="ChEBI" id="CHEBI:29108"/>
        <label>2</label>
    </ligand>
</feature>
<feature type="site" description="Transition state stabilizer" evidence="2">
    <location>
        <position position="68"/>
    </location>
</feature>
<feature type="glycosylation site" description="N-linked (GlcNAc...) asparagine" evidence="1">
    <location>
        <position position="158"/>
    </location>
</feature>
<feature type="glycosylation site" description="N-linked (GlcNAc...) asparagine" evidence="1">
    <location>
        <position position="172"/>
    </location>
</feature>
<feature type="glycosylation site" description="N-linked (GlcNAc...) asparagine" evidence="1">
    <location>
        <position position="213"/>
    </location>
</feature>
<feature type="disulfide bond" evidence="2">
    <location>
        <begin position="41"/>
        <end position="119"/>
    </location>
</feature>
<feature type="disulfide bond" evidence="2">
    <location>
        <begin position="74"/>
        <end position="79"/>
    </location>
</feature>
<feature type="disulfide bond" evidence="2">
    <location>
        <begin position="125"/>
        <end position="325"/>
    </location>
</feature>
<feature type="disulfide bond" evidence="2">
    <location>
        <begin position="204"/>
        <end position="236"/>
    </location>
</feature>
<proteinExistence type="evidence at transcript level"/>
<dbReference type="EC" id="1.11.1.7"/>
<dbReference type="EMBL" id="AL353993">
    <property type="protein sequence ID" value="CAB89328.1"/>
    <property type="molecule type" value="Genomic_DNA"/>
</dbReference>
<dbReference type="EMBL" id="CP002688">
    <property type="protein sequence ID" value="AED92125.1"/>
    <property type="molecule type" value="Genomic_DNA"/>
</dbReference>
<dbReference type="EMBL" id="AY072172">
    <property type="protein sequence ID" value="AAL59994.1"/>
    <property type="molecule type" value="mRNA"/>
</dbReference>
<dbReference type="EMBL" id="AY142591">
    <property type="protein sequence ID" value="AAN13160.1"/>
    <property type="molecule type" value="mRNA"/>
</dbReference>
<dbReference type="EMBL" id="Z18075">
    <property type="protein sequence ID" value="CAA79097.2"/>
    <property type="status" value="ALT_FRAME"/>
    <property type="molecule type" value="mRNA"/>
</dbReference>
<dbReference type="PIR" id="T49953">
    <property type="entry name" value="T49953"/>
</dbReference>
<dbReference type="RefSeq" id="NP_197022.1">
    <property type="nucleotide sequence ID" value="NM_121522.4"/>
</dbReference>
<dbReference type="SMR" id="Q9LXG3"/>
<dbReference type="FunCoup" id="Q9LXG3">
    <property type="interactions" value="149"/>
</dbReference>
<dbReference type="STRING" id="3702.Q9LXG3"/>
<dbReference type="PeroxiBase" id="222">
    <property type="entry name" value="AtPrx56"/>
</dbReference>
<dbReference type="GlyCosmos" id="Q9LXG3">
    <property type="glycosylation" value="3 sites, No reported glycans"/>
</dbReference>
<dbReference type="GlyGen" id="Q9LXG3">
    <property type="glycosylation" value="3 sites"/>
</dbReference>
<dbReference type="PaxDb" id="3702-AT5G15180.1"/>
<dbReference type="ProteomicsDB" id="236785"/>
<dbReference type="EnsemblPlants" id="AT5G15180.1">
    <property type="protein sequence ID" value="AT5G15180.1"/>
    <property type="gene ID" value="AT5G15180"/>
</dbReference>
<dbReference type="GeneID" id="831370"/>
<dbReference type="Gramene" id="AT5G15180.1">
    <property type="protein sequence ID" value="AT5G15180.1"/>
    <property type="gene ID" value="AT5G15180"/>
</dbReference>
<dbReference type="KEGG" id="ath:AT5G15180"/>
<dbReference type="Araport" id="AT5G15180"/>
<dbReference type="TAIR" id="AT5G15180">
    <property type="gene designation" value="PRX56"/>
</dbReference>
<dbReference type="eggNOG" id="ENOG502QQVF">
    <property type="taxonomic scope" value="Eukaryota"/>
</dbReference>
<dbReference type="HOGENOM" id="CLU_010543_0_3_1"/>
<dbReference type="InParanoid" id="Q9LXG3"/>
<dbReference type="OMA" id="QMNISCL"/>
<dbReference type="OrthoDB" id="2113341at2759"/>
<dbReference type="PhylomeDB" id="Q9LXG3"/>
<dbReference type="BioCyc" id="ARA:AT5G15180-MONOMER"/>
<dbReference type="PRO" id="PR:Q9LXG3"/>
<dbReference type="Proteomes" id="UP000006548">
    <property type="component" value="Chromosome 5"/>
</dbReference>
<dbReference type="ExpressionAtlas" id="Q9LXG3">
    <property type="expression patterns" value="baseline and differential"/>
</dbReference>
<dbReference type="GO" id="GO:0005576">
    <property type="term" value="C:extracellular region"/>
    <property type="evidence" value="ECO:0007669"/>
    <property type="project" value="UniProtKB-SubCell"/>
</dbReference>
<dbReference type="GO" id="GO:0020037">
    <property type="term" value="F:heme binding"/>
    <property type="evidence" value="ECO:0007669"/>
    <property type="project" value="InterPro"/>
</dbReference>
<dbReference type="GO" id="GO:0140825">
    <property type="term" value="F:lactoperoxidase activity"/>
    <property type="evidence" value="ECO:0007669"/>
    <property type="project" value="UniProtKB-EC"/>
</dbReference>
<dbReference type="GO" id="GO:0046872">
    <property type="term" value="F:metal ion binding"/>
    <property type="evidence" value="ECO:0007669"/>
    <property type="project" value="UniProtKB-KW"/>
</dbReference>
<dbReference type="GO" id="GO:0042744">
    <property type="term" value="P:hydrogen peroxide catabolic process"/>
    <property type="evidence" value="ECO:0007669"/>
    <property type="project" value="UniProtKB-KW"/>
</dbReference>
<dbReference type="GO" id="GO:0006979">
    <property type="term" value="P:response to oxidative stress"/>
    <property type="evidence" value="ECO:0007669"/>
    <property type="project" value="InterPro"/>
</dbReference>
<dbReference type="CDD" id="cd00693">
    <property type="entry name" value="secretory_peroxidase"/>
    <property type="match status" value="1"/>
</dbReference>
<dbReference type="FunFam" id="1.10.420.10:FF:000008">
    <property type="entry name" value="Peroxidase"/>
    <property type="match status" value="1"/>
</dbReference>
<dbReference type="FunFam" id="1.10.520.10:FF:000001">
    <property type="entry name" value="Peroxidase"/>
    <property type="match status" value="1"/>
</dbReference>
<dbReference type="Gene3D" id="1.10.520.10">
    <property type="match status" value="1"/>
</dbReference>
<dbReference type="Gene3D" id="1.10.420.10">
    <property type="entry name" value="Peroxidase, domain 2"/>
    <property type="match status" value="1"/>
</dbReference>
<dbReference type="InterPro" id="IPR002016">
    <property type="entry name" value="Haem_peroxidase"/>
</dbReference>
<dbReference type="InterPro" id="IPR010255">
    <property type="entry name" value="Haem_peroxidase_sf"/>
</dbReference>
<dbReference type="InterPro" id="IPR000823">
    <property type="entry name" value="Peroxidase_pln"/>
</dbReference>
<dbReference type="InterPro" id="IPR019794">
    <property type="entry name" value="Peroxidases_AS"/>
</dbReference>
<dbReference type="InterPro" id="IPR019793">
    <property type="entry name" value="Peroxidases_heam-ligand_BS"/>
</dbReference>
<dbReference type="InterPro" id="IPR033905">
    <property type="entry name" value="Secretory_peroxidase"/>
</dbReference>
<dbReference type="PANTHER" id="PTHR31235">
    <property type="entry name" value="PEROXIDASE 25-RELATED"/>
    <property type="match status" value="1"/>
</dbReference>
<dbReference type="Pfam" id="PF00141">
    <property type="entry name" value="peroxidase"/>
    <property type="match status" value="1"/>
</dbReference>
<dbReference type="PRINTS" id="PR00458">
    <property type="entry name" value="PEROXIDASE"/>
</dbReference>
<dbReference type="PRINTS" id="PR00461">
    <property type="entry name" value="PLPEROXIDASE"/>
</dbReference>
<dbReference type="SUPFAM" id="SSF48113">
    <property type="entry name" value="Heme-dependent peroxidases"/>
    <property type="match status" value="1"/>
</dbReference>
<dbReference type="PROSITE" id="PS00435">
    <property type="entry name" value="PEROXIDASE_1"/>
    <property type="match status" value="1"/>
</dbReference>
<dbReference type="PROSITE" id="PS00436">
    <property type="entry name" value="PEROXIDASE_2"/>
    <property type="match status" value="1"/>
</dbReference>
<dbReference type="PROSITE" id="PS50873">
    <property type="entry name" value="PEROXIDASE_4"/>
    <property type="match status" value="1"/>
</dbReference>
<name>PER56_ARATH</name>
<accession>Q9LXG3</accession>
<accession>Q41955</accession>
<organism>
    <name type="scientific">Arabidopsis thaliana</name>
    <name type="common">Mouse-ear cress</name>
    <dbReference type="NCBI Taxonomy" id="3702"/>
    <lineage>
        <taxon>Eukaryota</taxon>
        <taxon>Viridiplantae</taxon>
        <taxon>Streptophyta</taxon>
        <taxon>Embryophyta</taxon>
        <taxon>Tracheophyta</taxon>
        <taxon>Spermatophyta</taxon>
        <taxon>Magnoliopsida</taxon>
        <taxon>eudicotyledons</taxon>
        <taxon>Gunneridae</taxon>
        <taxon>Pentapetalae</taxon>
        <taxon>rosids</taxon>
        <taxon>malvids</taxon>
        <taxon>Brassicales</taxon>
        <taxon>Brassicaceae</taxon>
        <taxon>Camelineae</taxon>
        <taxon>Arabidopsis</taxon>
    </lineage>
</organism>
<reference key="1">
    <citation type="journal article" date="2000" name="Nature">
        <title>Sequence and analysis of chromosome 5 of the plant Arabidopsis thaliana.</title>
        <authorList>
            <person name="Tabata S."/>
            <person name="Kaneko T."/>
            <person name="Nakamura Y."/>
            <person name="Kotani H."/>
            <person name="Kato T."/>
            <person name="Asamizu E."/>
            <person name="Miyajima N."/>
            <person name="Sasamoto S."/>
            <person name="Kimura T."/>
            <person name="Hosouchi T."/>
            <person name="Kawashima K."/>
            <person name="Kohara M."/>
            <person name="Matsumoto M."/>
            <person name="Matsuno A."/>
            <person name="Muraki A."/>
            <person name="Nakayama S."/>
            <person name="Nakazaki N."/>
            <person name="Naruo K."/>
            <person name="Okumura S."/>
            <person name="Shinpo S."/>
            <person name="Takeuchi C."/>
            <person name="Wada T."/>
            <person name="Watanabe A."/>
            <person name="Yamada M."/>
            <person name="Yasuda M."/>
            <person name="Sato S."/>
            <person name="de la Bastide M."/>
            <person name="Huang E."/>
            <person name="Spiegel L."/>
            <person name="Gnoj L."/>
            <person name="O'Shaughnessy A."/>
            <person name="Preston R."/>
            <person name="Habermann K."/>
            <person name="Murray J."/>
            <person name="Johnson D."/>
            <person name="Rohlfing T."/>
            <person name="Nelson J."/>
            <person name="Stoneking T."/>
            <person name="Pepin K."/>
            <person name="Spieth J."/>
            <person name="Sekhon M."/>
            <person name="Armstrong J."/>
            <person name="Becker M."/>
            <person name="Belter E."/>
            <person name="Cordum H."/>
            <person name="Cordes M."/>
            <person name="Courtney L."/>
            <person name="Courtney W."/>
            <person name="Dante M."/>
            <person name="Du H."/>
            <person name="Edwards J."/>
            <person name="Fryman J."/>
            <person name="Haakensen B."/>
            <person name="Lamar E."/>
            <person name="Latreille P."/>
            <person name="Leonard S."/>
            <person name="Meyer R."/>
            <person name="Mulvaney E."/>
            <person name="Ozersky P."/>
            <person name="Riley A."/>
            <person name="Strowmatt C."/>
            <person name="Wagner-McPherson C."/>
            <person name="Wollam A."/>
            <person name="Yoakum M."/>
            <person name="Bell M."/>
            <person name="Dedhia N."/>
            <person name="Parnell L."/>
            <person name="Shah R."/>
            <person name="Rodriguez M."/>
            <person name="Hoon See L."/>
            <person name="Vil D."/>
            <person name="Baker J."/>
            <person name="Kirchoff K."/>
            <person name="Toth K."/>
            <person name="King L."/>
            <person name="Bahret A."/>
            <person name="Miller B."/>
            <person name="Marra M.A."/>
            <person name="Martienssen R."/>
            <person name="McCombie W.R."/>
            <person name="Wilson R.K."/>
            <person name="Murphy G."/>
            <person name="Bancroft I."/>
            <person name="Volckaert G."/>
            <person name="Wambutt R."/>
            <person name="Duesterhoeft A."/>
            <person name="Stiekema W."/>
            <person name="Pohl T."/>
            <person name="Entian K.-D."/>
            <person name="Terryn N."/>
            <person name="Hartley N."/>
            <person name="Bent E."/>
            <person name="Johnson S."/>
            <person name="Langham S.-A."/>
            <person name="McCullagh B."/>
            <person name="Robben J."/>
            <person name="Grymonprez B."/>
            <person name="Zimmermann W."/>
            <person name="Ramsperger U."/>
            <person name="Wedler H."/>
            <person name="Balke K."/>
            <person name="Wedler E."/>
            <person name="Peters S."/>
            <person name="van Staveren M."/>
            <person name="Dirkse W."/>
            <person name="Mooijman P."/>
            <person name="Klein Lankhorst R."/>
            <person name="Weitzenegger T."/>
            <person name="Bothe G."/>
            <person name="Rose M."/>
            <person name="Hauf J."/>
            <person name="Berneiser S."/>
            <person name="Hempel S."/>
            <person name="Feldpausch M."/>
            <person name="Lamberth S."/>
            <person name="Villarroel R."/>
            <person name="Gielen J."/>
            <person name="Ardiles W."/>
            <person name="Bents O."/>
            <person name="Lemcke K."/>
            <person name="Kolesov G."/>
            <person name="Mayer K.F.X."/>
            <person name="Rudd S."/>
            <person name="Schoof H."/>
            <person name="Schueller C."/>
            <person name="Zaccaria P."/>
            <person name="Mewes H.-W."/>
            <person name="Bevan M."/>
            <person name="Fransz P.F."/>
        </authorList>
    </citation>
    <scope>NUCLEOTIDE SEQUENCE [LARGE SCALE GENOMIC DNA]</scope>
    <source>
        <strain>cv. Columbia</strain>
    </source>
</reference>
<reference key="2">
    <citation type="journal article" date="2017" name="Plant J.">
        <title>Araport11: a complete reannotation of the Arabidopsis thaliana reference genome.</title>
        <authorList>
            <person name="Cheng C.Y."/>
            <person name="Krishnakumar V."/>
            <person name="Chan A.P."/>
            <person name="Thibaud-Nissen F."/>
            <person name="Schobel S."/>
            <person name="Town C.D."/>
        </authorList>
    </citation>
    <scope>GENOME REANNOTATION</scope>
    <source>
        <strain>cv. Columbia</strain>
    </source>
</reference>
<reference key="3">
    <citation type="journal article" date="2003" name="Science">
        <title>Empirical analysis of transcriptional activity in the Arabidopsis genome.</title>
        <authorList>
            <person name="Yamada K."/>
            <person name="Lim J."/>
            <person name="Dale J.M."/>
            <person name="Chen H."/>
            <person name="Shinn P."/>
            <person name="Palm C.J."/>
            <person name="Southwick A.M."/>
            <person name="Wu H.C."/>
            <person name="Kim C.J."/>
            <person name="Nguyen M."/>
            <person name="Pham P.K."/>
            <person name="Cheuk R.F."/>
            <person name="Karlin-Newmann G."/>
            <person name="Liu S.X."/>
            <person name="Lam B."/>
            <person name="Sakano H."/>
            <person name="Wu T."/>
            <person name="Yu G."/>
            <person name="Miranda M."/>
            <person name="Quach H.L."/>
            <person name="Tripp M."/>
            <person name="Chang C.H."/>
            <person name="Lee J.M."/>
            <person name="Toriumi M.J."/>
            <person name="Chan M.M."/>
            <person name="Tang C.C."/>
            <person name="Onodera C.S."/>
            <person name="Deng J.M."/>
            <person name="Akiyama K."/>
            <person name="Ansari Y."/>
            <person name="Arakawa T."/>
            <person name="Banh J."/>
            <person name="Banno F."/>
            <person name="Bowser L."/>
            <person name="Brooks S.Y."/>
            <person name="Carninci P."/>
            <person name="Chao Q."/>
            <person name="Choy N."/>
            <person name="Enju A."/>
            <person name="Goldsmith A.D."/>
            <person name="Gurjal M."/>
            <person name="Hansen N.F."/>
            <person name="Hayashizaki Y."/>
            <person name="Johnson-Hopson C."/>
            <person name="Hsuan V.W."/>
            <person name="Iida K."/>
            <person name="Karnes M."/>
            <person name="Khan S."/>
            <person name="Koesema E."/>
            <person name="Ishida J."/>
            <person name="Jiang P.X."/>
            <person name="Jones T."/>
            <person name="Kawai J."/>
            <person name="Kamiya A."/>
            <person name="Meyers C."/>
            <person name="Nakajima M."/>
            <person name="Narusaka M."/>
            <person name="Seki M."/>
            <person name="Sakurai T."/>
            <person name="Satou M."/>
            <person name="Tamse R."/>
            <person name="Vaysberg M."/>
            <person name="Wallender E.K."/>
            <person name="Wong C."/>
            <person name="Yamamura Y."/>
            <person name="Yuan S."/>
            <person name="Shinozaki K."/>
            <person name="Davis R.W."/>
            <person name="Theologis A."/>
            <person name="Ecker J.R."/>
        </authorList>
    </citation>
    <scope>NUCLEOTIDE SEQUENCE [LARGE SCALE MRNA]</scope>
    <source>
        <strain>cv. Columbia</strain>
    </source>
</reference>
<reference key="4">
    <citation type="journal article" date="1993" name="Plant J.">
        <title>An inventory of 1152 expressed sequence tags obtained by partial sequencing of cDNAs from Arabidopsis thaliana.</title>
        <authorList>
            <person name="Hoefte H."/>
            <person name="Desprez T."/>
            <person name="Amselem J."/>
            <person name="Chiapello H."/>
            <person name="Rouze P."/>
            <person name="Caboche M."/>
            <person name="Moisan A."/>
            <person name="Jourjon M.-F."/>
            <person name="Charpenteau J.-L."/>
            <person name="Berthomieu P."/>
            <person name="Guerrier D."/>
            <person name="Giraudat J."/>
            <person name="Quigley F."/>
            <person name="Thomas F."/>
            <person name="Yu D.-Y."/>
            <person name="Mache R."/>
            <person name="Raynal M."/>
            <person name="Cooke R."/>
            <person name="Grellet F."/>
            <person name="Delseny M."/>
            <person name="Parmentier Y."/>
            <person name="de Marcillac G."/>
            <person name="Gigot C."/>
            <person name="Fleck J."/>
            <person name="Philipps G."/>
            <person name="Axelos M."/>
            <person name="Bardet C."/>
            <person name="Tremousaygue D."/>
            <person name="Lescure B."/>
        </authorList>
    </citation>
    <scope>NUCLEOTIDE SEQUENCE [LARGE SCALE MRNA] OF 3-136</scope>
    <source>
        <strain>cv. Columbia</strain>
        <tissue>Seedling</tissue>
    </source>
</reference>
<reference key="5">
    <citation type="journal article" date="2002" name="Gene">
        <title>Analysis and expression of the class III peroxidase large gene family in Arabidopsis thaliana.</title>
        <authorList>
            <person name="Tognolli M."/>
            <person name="Penel C."/>
            <person name="Greppin H."/>
            <person name="Simon P."/>
        </authorList>
    </citation>
    <scope>GENE FAMILY ORGANIZATION</scope>
    <scope>NOMENCLATURE</scope>
    <source>
        <strain>cv. Columbia</strain>
    </source>
</reference>
<sequence length="329" mass="36225">MAALKMTISCFLFLQVIYCLLSSFAPTNVQGLKVGFYDKACPKAELIVKKSVFEAVKNDRTIAAPLLRMFFHDCFVRGCEGSVLLELKNKKDEKNSIPNLTLRGFEIIDNVKAALEKECPGIVSCSDVLALVARDAMVALNGPSWEVETGRRDGLVTNITEALLNLPSPFNNISSLITQFQSKGLDKKDLVVLSGGHTIGNGHCPQITNRLYNFTGKGDSDPNLDTEYAVKLRGKCKPTDTTTALEMDPGSFKTFDESYFKLVSQRRGLFQSDAALLDNQETKSYVLKSLNSDGSTFFKDFGVSMVKMGRIGVLTGQVGEVRKKCRMVN</sequence>
<protein>
    <recommendedName>
        <fullName>Peroxidase 56</fullName>
        <shortName>Atperox P56</shortName>
        <ecNumber>1.11.1.7</ecNumber>
    </recommendedName>
    <alternativeName>
        <fullName>ATP33</fullName>
    </alternativeName>
</protein>
<gene>
    <name type="primary">PER56</name>
    <name type="synonym">P56</name>
    <name type="ordered locus">At5g15180</name>
    <name type="ORF">F8M21_70</name>
</gene>